<organism>
    <name type="scientific">Gallus gallus</name>
    <name type="common">Chicken</name>
    <dbReference type="NCBI Taxonomy" id="9031"/>
    <lineage>
        <taxon>Eukaryota</taxon>
        <taxon>Metazoa</taxon>
        <taxon>Chordata</taxon>
        <taxon>Craniata</taxon>
        <taxon>Vertebrata</taxon>
        <taxon>Euteleostomi</taxon>
        <taxon>Archelosauria</taxon>
        <taxon>Archosauria</taxon>
        <taxon>Dinosauria</taxon>
        <taxon>Saurischia</taxon>
        <taxon>Theropoda</taxon>
        <taxon>Coelurosauria</taxon>
        <taxon>Aves</taxon>
        <taxon>Neognathae</taxon>
        <taxon>Galloanserae</taxon>
        <taxon>Galliformes</taxon>
        <taxon>Phasianidae</taxon>
        <taxon>Phasianinae</taxon>
        <taxon>Gallus</taxon>
    </lineage>
</organism>
<gene>
    <name type="primary">H3-I</name>
</gene>
<gene>
    <name type="primary">H3-II</name>
</gene>
<gene>
    <name type="primary">H3-III</name>
</gene>
<gene>
    <name type="primary">H3-IV</name>
</gene>
<gene>
    <name type="primary">H3-V</name>
</gene>
<gene>
    <name type="primary">H3-VI</name>
</gene>
<gene>
    <name type="primary">H3-VII</name>
</gene>
<gene>
    <name type="primary">H3-VIII</name>
</gene>
<protein>
    <recommendedName>
        <fullName>Histone H3.2</fullName>
    </recommendedName>
    <alternativeName>
        <fullName>Histone H3 class I</fullName>
    </alternativeName>
</protein>
<feature type="initiator methionine" description="Removed" evidence="13">
    <location>
        <position position="1"/>
    </location>
</feature>
<feature type="chain" id="PRO_0000221260" description="Histone H3.2">
    <location>
        <begin position="2"/>
        <end position="136"/>
    </location>
</feature>
<feature type="region of interest" description="Disordered" evidence="8">
    <location>
        <begin position="1"/>
        <end position="43"/>
    </location>
</feature>
<feature type="site" description="Involved in HMGB1-binding">
    <location>
        <begin position="37"/>
        <end position="38"/>
    </location>
</feature>
<feature type="modified residue" description="Asymmetric dimethylarginine; by PRMT6; alternate" evidence="7">
    <location>
        <position position="3"/>
    </location>
</feature>
<feature type="modified residue" description="Citrulline; alternate" evidence="7">
    <location>
        <position position="3"/>
    </location>
</feature>
<feature type="modified residue" description="Phosphothreonine; by HASPIN and VRK1" evidence="7">
    <location>
        <position position="4"/>
    </location>
</feature>
<feature type="modified residue" description="Allysine; alternate" evidence="7">
    <location>
        <position position="5"/>
    </location>
</feature>
<feature type="modified residue" description="N6,N6,N6-trimethyllysine; alternate" evidence="10">
    <location>
        <position position="5"/>
    </location>
</feature>
<feature type="modified residue" description="N6,N6-dimethyllysine; alternate" evidence="10">
    <location>
        <position position="5"/>
    </location>
</feature>
<feature type="modified residue" description="N6-(2-hydroxyisobutyryl)lysine; alternate" evidence="2">
    <location>
        <position position="5"/>
    </location>
</feature>
<feature type="modified residue" description="N6-acetyllysine; alternate" evidence="7">
    <location>
        <position position="5"/>
    </location>
</feature>
<feature type="modified residue" description="N6-crotonyllysine; alternate" evidence="7">
    <location>
        <position position="5"/>
    </location>
</feature>
<feature type="modified residue" description="N6-methyllysine; alternate" evidence="10">
    <location>
        <position position="5"/>
    </location>
</feature>
<feature type="modified residue" description="5-glutamyl dopamine; alternate" evidence="7">
    <location>
        <position position="6"/>
    </location>
</feature>
<feature type="modified residue" description="5-glutamyl serotonin; alternate" evidence="7">
    <location>
        <position position="6"/>
    </location>
</feature>
<feature type="modified residue" description="Phosphothreonine; by PKC" evidence="7">
    <location>
        <position position="7"/>
    </location>
</feature>
<feature type="modified residue" description="Citrulline; alternate" evidence="7">
    <location>
        <position position="9"/>
    </location>
</feature>
<feature type="modified residue" description="Symmetric dimethylarginine; by PRMT5; alternate" evidence="1">
    <location>
        <position position="9"/>
    </location>
</feature>
<feature type="modified residue" description="N6,N6,N6-trimethyllysine; alternate" evidence="10">
    <location>
        <position position="10"/>
    </location>
</feature>
<feature type="modified residue" description="N6,N6-dimethyllysine; alternate" evidence="10">
    <location>
        <position position="10"/>
    </location>
</feature>
<feature type="modified residue" description="N6-(2-hydroxyisobutyryl)lysine; alternate" evidence="2">
    <location>
        <position position="10"/>
    </location>
</feature>
<feature type="modified residue" description="N6-acetyllysine; alternate" evidence="7">
    <location>
        <position position="10"/>
    </location>
</feature>
<feature type="modified residue" description="N6-crotonyllysine; alternate" evidence="7">
    <location>
        <position position="10"/>
    </location>
</feature>
<feature type="modified residue" description="N6-lactoyllysine; alternate" evidence="7">
    <location>
        <position position="10"/>
    </location>
</feature>
<feature type="modified residue" description="ADP-ribosylserine; alternate" evidence="2">
    <location>
        <position position="11"/>
    </location>
</feature>
<feature type="modified residue" description="Phosphoserine; alternate; by AURKB, AURKC, RPS6KA3, RPS6KA4 and RPS6KA5" evidence="7">
    <location>
        <position position="11"/>
    </location>
</feature>
<feature type="modified residue" description="Phosphothreonine; by PKC" evidence="7">
    <location>
        <position position="12"/>
    </location>
</feature>
<feature type="modified residue" description="N6,N6-dimethyllysine; alternate" evidence="10">
    <location>
        <position position="15"/>
    </location>
</feature>
<feature type="modified residue" description="N6-(2-hydroxyisobutyryl)lysine; alternate" evidence="2">
    <location>
        <position position="15"/>
    </location>
</feature>
<feature type="modified residue" description="N6-acetyllysine; alternate" evidence="10">
    <location>
        <position position="15"/>
    </location>
</feature>
<feature type="modified residue" description="N6-glutaryllysine; alternate" evidence="7">
    <location>
        <position position="15"/>
    </location>
</feature>
<feature type="modified residue" description="N6-lactoyllysine; alternate" evidence="4">
    <location>
        <position position="15"/>
    </location>
</feature>
<feature type="modified residue" description="Asymmetric dimethylarginine; by CARM1; alternate" evidence="7">
    <location>
        <position position="18"/>
    </location>
</feature>
<feature type="modified residue" description="Citrulline; alternate" evidence="7">
    <location>
        <position position="18"/>
    </location>
</feature>
<feature type="modified residue" description="N6-(2-hydroxyisobutyryl)lysine; alternate" evidence="2">
    <location>
        <position position="19"/>
    </location>
</feature>
<feature type="modified residue" description="N6-acetyllysine; alternate" evidence="10">
    <location>
        <position position="19"/>
    </location>
</feature>
<feature type="modified residue" description="N6-butyryllysine; alternate" evidence="3">
    <location>
        <position position="19"/>
    </location>
</feature>
<feature type="modified residue" description="N6-crotonyllysine; alternate" evidence="7">
    <location>
        <position position="19"/>
    </location>
</feature>
<feature type="modified residue" description="N6-glutaryllysine; alternate" evidence="7">
    <location>
        <position position="19"/>
    </location>
</feature>
<feature type="modified residue" description="N6-lactoyllysine; alternate" evidence="7">
    <location>
        <position position="19"/>
    </location>
</feature>
<feature type="modified residue" description="N6-methyllysine; alternate" evidence="7">
    <location>
        <position position="19"/>
    </location>
</feature>
<feature type="modified residue" description="N6-(2-hydroxyisobutyryl)lysine; alternate" evidence="2">
    <location>
        <position position="24"/>
    </location>
</feature>
<feature type="modified residue" description="N6-acetyllysine; alternate" evidence="10">
    <location>
        <position position="24"/>
    </location>
</feature>
<feature type="modified residue" description="N6-butyryllysine; alternate" evidence="3">
    <location>
        <position position="24"/>
    </location>
</feature>
<feature type="modified residue" description="N6-crotonyllysine; alternate" evidence="7">
    <location>
        <position position="24"/>
    </location>
</feature>
<feature type="modified residue" description="N6-glutaryllysine; alternate" evidence="7">
    <location>
        <position position="24"/>
    </location>
</feature>
<feature type="modified residue" description="N6-lactoyllysine; alternate" evidence="7">
    <location>
        <position position="24"/>
    </location>
</feature>
<feature type="modified residue" description="N6-methyllysine; alternate" evidence="7">
    <location>
        <position position="24"/>
    </location>
</feature>
<feature type="modified residue" description="Citrulline" evidence="7">
    <location>
        <position position="27"/>
    </location>
</feature>
<feature type="modified residue" description="N6,N6,N6-trimethyllysine; alternate" evidence="7">
    <location>
        <position position="28"/>
    </location>
</feature>
<feature type="modified residue" description="N6,N6-dimethyllysine; alternate" evidence="7">
    <location>
        <position position="28"/>
    </location>
</feature>
<feature type="modified residue" description="N6-(2-hydroxyisobutyryl)lysine; alternate" evidence="2">
    <location>
        <position position="28"/>
    </location>
</feature>
<feature type="modified residue" description="N6-acetyllysine; alternate" evidence="7">
    <location>
        <position position="28"/>
    </location>
</feature>
<feature type="modified residue" description="N6-crotonyllysine; alternate" evidence="7">
    <location>
        <position position="28"/>
    </location>
</feature>
<feature type="modified residue" description="N6-glutaryllysine; alternate" evidence="7">
    <location>
        <position position="28"/>
    </location>
</feature>
<feature type="modified residue" description="N6-lactoyllysine; alternate" evidence="7">
    <location>
        <position position="28"/>
    </location>
</feature>
<feature type="modified residue" description="N6-methyllysine; alternate" evidence="15">
    <location>
        <position position="28"/>
    </location>
</feature>
<feature type="modified residue" description="ADP-ribosylserine; alternate" evidence="2">
    <location>
        <position position="29"/>
    </location>
</feature>
<feature type="modified residue" description="Phosphoserine; alternate; by AURKB, AURKC and RPS6KA5" evidence="7">
    <location>
        <position position="29"/>
    </location>
</feature>
<feature type="modified residue" description="N6,N6,N6-trimethyllysine; alternate" evidence="7">
    <location>
        <position position="37"/>
    </location>
</feature>
<feature type="modified residue" description="N6,N6-dimethyllysine; alternate" evidence="7">
    <location>
        <position position="37"/>
    </location>
</feature>
<feature type="modified residue" description="N6-(2-hydroxyisobutyryl)lysine; alternate" evidence="2">
    <location>
        <position position="37"/>
    </location>
</feature>
<feature type="modified residue" description="N6-acetyllysine; alternate" evidence="7">
    <location>
        <position position="37"/>
    </location>
</feature>
<feature type="modified residue" description="N6-methyllysine; alternate" evidence="15">
    <location>
        <position position="37"/>
    </location>
</feature>
<feature type="modified residue" description="N6-methyllysine" evidence="2">
    <location>
        <position position="38"/>
    </location>
</feature>
<feature type="modified residue" description="Phosphotyrosine" evidence="7">
    <location>
        <position position="42"/>
    </location>
</feature>
<feature type="modified residue" description="N6,N6,N6-trimethyllysine; alternate" evidence="7">
    <location>
        <position position="57"/>
    </location>
</feature>
<feature type="modified residue" description="N6-(2-hydroxyisobutyryl)lysine; alternate" evidence="2">
    <location>
        <position position="57"/>
    </location>
</feature>
<feature type="modified residue" description="N6-acetyllysine; alternate" evidence="7">
    <location>
        <position position="57"/>
    </location>
</feature>
<feature type="modified residue" description="N6-crotonyllysine; alternate" evidence="7">
    <location>
        <position position="57"/>
    </location>
</feature>
<feature type="modified residue" description="N6-glutaryllysine; alternate" evidence="7">
    <location>
        <position position="57"/>
    </location>
</feature>
<feature type="modified residue" description="N6-lactoyllysine; alternate" evidence="4">
    <location>
        <position position="57"/>
    </location>
</feature>
<feature type="modified residue" description="N6-methyllysine; by EHMT2; alternate" evidence="7">
    <location>
        <position position="57"/>
    </location>
</feature>
<feature type="modified residue" description="N6-succinyllysine; alternate" evidence="4">
    <location>
        <position position="57"/>
    </location>
</feature>
<feature type="modified residue" description="Phosphoserine" evidence="7">
    <location>
        <position position="58"/>
    </location>
</feature>
<feature type="modified residue" description="N6-(2-hydroxyisobutyryl)lysine; alternate" evidence="2">
    <location>
        <position position="65"/>
    </location>
</feature>
<feature type="modified residue" description="N6-methyllysine; alternate" evidence="7">
    <location>
        <position position="65"/>
    </location>
</feature>
<feature type="modified residue" description="N6,N6,N6-trimethyllysine; alternate" evidence="4">
    <location>
        <position position="80"/>
    </location>
</feature>
<feature type="modified residue" description="N6,N6-dimethyllysine; alternate" evidence="10">
    <location>
        <position position="80"/>
    </location>
</feature>
<feature type="modified residue" description="N6-(2-hydroxyisobutyryl)lysine; alternate" evidence="2">
    <location>
        <position position="80"/>
    </location>
</feature>
<feature type="modified residue" description="N6-acetyllysine; alternate" evidence="7">
    <location>
        <position position="80"/>
    </location>
</feature>
<feature type="modified residue" description="N6-glutaryllysine; alternate" evidence="7">
    <location>
        <position position="80"/>
    </location>
</feature>
<feature type="modified residue" description="N6-lactoyllysine; alternate" evidence="7">
    <location>
        <position position="80"/>
    </location>
</feature>
<feature type="modified residue" description="N6-methyllysine; alternate" evidence="10">
    <location>
        <position position="80"/>
    </location>
</feature>
<feature type="modified residue" description="N6-succinyllysine; alternate" evidence="4">
    <location>
        <position position="80"/>
    </location>
</feature>
<feature type="modified residue" description="Phosphothreonine" evidence="7">
    <location>
        <position position="81"/>
    </location>
</feature>
<feature type="modified residue" description="Phosphoserine" evidence="5">
    <location>
        <position position="87"/>
    </location>
</feature>
<feature type="modified residue" description="Phosphothreonine" evidence="7">
    <location>
        <position position="108"/>
    </location>
</feature>
<feature type="modified residue" description="N6-acetyllysine; alternate" evidence="7">
    <location>
        <position position="116"/>
    </location>
</feature>
<feature type="modified residue" description="N6-glutaryllysine; alternate" evidence="7">
    <location>
        <position position="116"/>
    </location>
</feature>
<feature type="modified residue" description="N6-(2-hydroxyisobutyryl)lysine; alternate" evidence="2">
    <location>
        <position position="123"/>
    </location>
</feature>
<feature type="modified residue" description="N6-acetyllysine; alternate" evidence="7">
    <location>
        <position position="123"/>
    </location>
</feature>
<feature type="modified residue" description="N6-glutaryllysine; alternate" evidence="7">
    <location>
        <position position="123"/>
    </location>
</feature>
<feature type="modified residue" description="N6-methyllysine; alternate" evidence="7">
    <location>
        <position position="123"/>
    </location>
</feature>
<feature type="modified residue" description="N6-succinyllysine; alternate" evidence="7">
    <location>
        <position position="123"/>
    </location>
</feature>
<feature type="lipid moiety-binding region" description="S-palmitoyl cysteine" evidence="7">
    <location>
        <position position="111"/>
    </location>
</feature>
<feature type="strand" evidence="16">
    <location>
        <begin position="34"/>
        <end position="37"/>
    </location>
</feature>
<feature type="helix" evidence="17">
    <location>
        <begin position="44"/>
        <end position="57"/>
    </location>
</feature>
<feature type="helix" evidence="17">
    <location>
        <begin position="65"/>
        <end position="79"/>
    </location>
</feature>
<feature type="strand" evidence="16">
    <location>
        <begin position="80"/>
        <end position="82"/>
    </location>
</feature>
<feature type="helix" evidence="17">
    <location>
        <begin position="87"/>
        <end position="114"/>
    </location>
</feature>
<feature type="strand" evidence="17">
    <location>
        <begin position="118"/>
        <end position="120"/>
    </location>
</feature>
<feature type="helix" evidence="17">
    <location>
        <begin position="122"/>
        <end position="131"/>
    </location>
</feature>
<evidence type="ECO:0000250" key="1"/>
<evidence type="ECO:0000250" key="2">
    <source>
        <dbReference type="UniProtKB" id="P68431"/>
    </source>
</evidence>
<evidence type="ECO:0000250" key="3">
    <source>
        <dbReference type="UniProtKB" id="P68433"/>
    </source>
</evidence>
<evidence type="ECO:0000250" key="4">
    <source>
        <dbReference type="UniProtKB" id="P84228"/>
    </source>
</evidence>
<evidence type="ECO:0000250" key="5">
    <source>
        <dbReference type="UniProtKB" id="P84243"/>
    </source>
</evidence>
<evidence type="ECO:0000250" key="6">
    <source>
        <dbReference type="UniProtKB" id="P84245"/>
    </source>
</evidence>
<evidence type="ECO:0000250" key="7">
    <source>
        <dbReference type="UniProtKB" id="Q71DI3"/>
    </source>
</evidence>
<evidence type="ECO:0000256" key="8">
    <source>
        <dbReference type="SAM" id="MobiDB-lite"/>
    </source>
</evidence>
<evidence type="ECO:0000269" key="9">
    <source>
    </source>
</evidence>
<evidence type="ECO:0000269" key="10">
    <source>
    </source>
</evidence>
<evidence type="ECO:0000269" key="11">
    <source>
    </source>
</evidence>
<evidence type="ECO:0000269" key="12">
    <source>
    </source>
</evidence>
<evidence type="ECO:0000269" key="13">
    <source>
    </source>
</evidence>
<evidence type="ECO:0000305" key="14"/>
<evidence type="ECO:0000305" key="15">
    <source>
    </source>
</evidence>
<evidence type="ECO:0007829" key="16">
    <source>
        <dbReference type="PDB" id="1EQZ"/>
    </source>
</evidence>
<evidence type="ECO:0007829" key="17">
    <source>
        <dbReference type="PDB" id="1TZY"/>
    </source>
</evidence>
<name>H32_CHICK</name>
<sequence length="136" mass="15388">MARTKQTARKSTGGKAPRKQLATKAARKSAPATGGVKKPHRYRPGTVALREIRRYQKSTELLIRKLPFQRLVREIAQDFKTDLRFQSSAVMALQEASEAYLVGLFEDTNLCAIHAKRVTIMPKDIQLARRIRGERA</sequence>
<keyword id="KW-0002">3D-structure</keyword>
<keyword id="KW-0007">Acetylation</keyword>
<keyword id="KW-0013">ADP-ribosylation</keyword>
<keyword id="KW-0158">Chromosome</keyword>
<keyword id="KW-0164">Citrullination</keyword>
<keyword id="KW-0903">Direct protein sequencing</keyword>
<keyword id="KW-0238">DNA-binding</keyword>
<keyword id="KW-0379">Hydroxylation</keyword>
<keyword id="KW-0449">Lipoprotein</keyword>
<keyword id="KW-0488">Methylation</keyword>
<keyword id="KW-0544">Nucleosome core</keyword>
<keyword id="KW-0539">Nucleus</keyword>
<keyword id="KW-0564">Palmitate</keyword>
<keyword id="KW-0597">Phosphoprotein</keyword>
<keyword id="KW-1185">Reference proteome</keyword>
<keyword id="KW-0832">Ubl conjugation</keyword>
<reference key="1">
    <citation type="journal article" date="1985" name="Nucleic Acids Res.">
        <title>Inverted duplication of histone genes in chicken and disposition of regulatory sequences.</title>
        <authorList>
            <person name="Wang S.W."/>
            <person name="Robins A.J."/>
            <person name="D'Andrea R."/>
            <person name="Wells J.R.E."/>
        </authorList>
    </citation>
    <scope>NUCLEOTIDE SEQUENCE [GENOMIC DNA]</scope>
</reference>
<reference key="2">
    <citation type="journal article" date="1982" name="Nature">
        <title>A chicken histone H3 gene contains intervening sequences.</title>
        <authorList>
            <person name="Engel J.D."/>
            <person name="Sugarman B.J."/>
            <person name="Dodgson J.B."/>
        </authorList>
    </citation>
    <scope>NUCLEOTIDE SEQUENCE [GENOMIC DNA]</scope>
</reference>
<reference key="3">
    <citation type="journal article" date="1991" name="Gene">
        <title>Nucleotide sequences of two members of the chicken H3 histone-encoding gene family.</title>
        <authorList>
            <person name="Nakayama T."/>
        </authorList>
    </citation>
    <scope>NUCLEOTIDE SEQUENCE [GENOMIC DNA] (H3-II AND H3-III)</scope>
</reference>
<reference key="4">
    <citation type="journal article" date="1991" name="Nucleic Acids Res.">
        <title>Nucleotide sequences of new members (H3-IV and H3-V) of the chicken H3 histone-encoding gene family.</title>
        <authorList>
            <person name="Setoguchi Y."/>
            <person name="Nakayama T."/>
        </authorList>
    </citation>
    <scope>NUCLEOTIDE SEQUENCE [GENOMIC DNA] (H3-IV AND H3-V)</scope>
    <source>
        <strain>White leghorn</strain>
    </source>
</reference>
<reference key="5">
    <citation type="journal article" date="1996" name="DNA Res.">
        <title>Organization of the chicken histone genes in a major gene cluster and generation of an almost complete set of the core histone protein sequences.</title>
        <authorList>
            <person name="Takami Y."/>
            <person name="Higashio M."/>
            <person name="Fukuoka T."/>
            <person name="Takechi S."/>
            <person name="Nakayama T."/>
        </authorList>
    </citation>
    <scope>NUCLEOTIDE SEQUENCE [GENOMIC DNA] (H3-VI; H3-VII AND H3-VIII)</scope>
    <source>
        <strain>White leghorn</strain>
        <tissue>Liver</tissue>
    </source>
</reference>
<reference key="6">
    <citation type="journal article" date="1974" name="Eur. J. Biochem.">
        <title>The determination of the primary structure of histone F3 from chicken erythrocytes by automatic Edman degradation. 2. Sequence analysis of histone F3.</title>
        <authorList>
            <person name="Brandt W.F."/>
            <person name="von Holt C."/>
        </authorList>
    </citation>
    <scope>PROTEIN SEQUENCE OF 2-136</scope>
</reference>
<reference key="7">
    <citation type="journal article" date="2002" name="Anal. Biochem.">
        <title>Identification of acetylation and methylation sites of histone H3 from chicken erythrocytes by high-accuracy matrix-assisted laser desorption ionization-time-of-flight, matrix-assisted laser desorption ionization-postsource decay, and nanoelectrospray ionization tandem mass spectrometry.</title>
        <authorList>
            <person name="Zhang K."/>
            <person name="Tang H."/>
            <person name="Huang L."/>
            <person name="Blankenship J.W."/>
            <person name="Jones P.R."/>
            <person name="Xiang F."/>
            <person name="Yau P.M."/>
            <person name="Burlingame A.L."/>
        </authorList>
    </citation>
    <scope>METHYLATION AT LYS-5; LYS-10; LYS-15; LYS-28; LYS-37 AND LYS-80</scope>
    <scope>ACETYLATION AT LYS-15; LYS-19 AND LYS-24</scope>
    <scope>IDENTIFICATION BY MASS SPECTROMETRY</scope>
</reference>
<reference key="8">
    <citation type="journal article" date="2008" name="Biochemistry">
        <title>Distinct domains in HMGB1 are involved in specific intramolecular and nucleosomal interactions.</title>
        <authorList>
            <person name="Kawase T."/>
            <person name="Sato K."/>
            <person name="Ueda T."/>
            <person name="Yoshida M."/>
        </authorList>
    </citation>
    <scope>INTERACTION WITH HMGB1</scope>
</reference>
<reference key="9">
    <citation type="journal article" date="1991" name="Proc. Natl. Acad. Sci. U.S.A.">
        <title>The nucleosomal core histone octamer at 3.1 A resolution: a tripartite protein assembly and a left-handed superhelix.</title>
        <authorList>
            <person name="Arents G."/>
            <person name="Burlingame R.W."/>
            <person name="Wang B.-C."/>
            <person name="Love W.E."/>
            <person name="Moudrianakis E.N."/>
        </authorList>
    </citation>
    <scope>X-RAY CRYSTALLOGRAPHY (3.1 ANGSTROMS)</scope>
</reference>
<reference key="10">
    <citation type="journal article" date="2000" name="Acta Crystallogr. D">
        <title>Asymmetries in the nucleosome core particle at 2.5 A resolution.</title>
        <authorList>
            <person name="Harp J.M."/>
            <person name="Hanson B.L."/>
            <person name="Timm D.E."/>
            <person name="Bunick G.J."/>
        </authorList>
    </citation>
    <scope>X-RAY CRYSTALLOGRAPHY (2.5 ANGSTROMS) IN COMPLEX WITH H2A; H2B AND H4</scope>
</reference>
<reference key="11">
    <citation type="journal article" date="2003" name="Acta Crystallogr. D">
        <title>Structure of the histone-core octamer in KCl/phosphate crystals at 2.15 A resolution.</title>
        <authorList>
            <person name="Chantalat L."/>
            <person name="Nicholson J.M."/>
            <person name="Lambert S.J."/>
            <person name="Reid A.J."/>
            <person name="Donovan M.J."/>
            <person name="Reynolds C.D."/>
            <person name="Wood C.M."/>
            <person name="Baldwin J.P."/>
        </authorList>
    </citation>
    <scope>X-RAY CRYSTALLOGRAPHY (2.15 ANGSTROMS) IN COMPLEX WITH H2A AND H2B</scope>
</reference>
<proteinExistence type="evidence at protein level"/>
<dbReference type="EMBL" id="X02218">
    <property type="protein sequence ID" value="CAA26138.1"/>
    <property type="molecule type" value="Genomic_DNA"/>
</dbReference>
<dbReference type="EMBL" id="J00869">
    <property type="protein sequence ID" value="AAA48795.1"/>
    <property type="status" value="ALT_SEQ"/>
    <property type="molecule type" value="Genomic_DNA"/>
</dbReference>
<dbReference type="EMBL" id="M61154">
    <property type="protein sequence ID" value="AAA48796.1"/>
    <property type="molecule type" value="Genomic_DNA"/>
</dbReference>
<dbReference type="EMBL" id="M61155">
    <property type="protein sequence ID" value="AAA48797.1"/>
    <property type="molecule type" value="Genomic_DNA"/>
</dbReference>
<dbReference type="EMBL" id="X62291">
    <property type="protein sequence ID" value="CAA44180.1"/>
    <property type="molecule type" value="Genomic_DNA"/>
</dbReference>
<dbReference type="EMBL" id="X62292">
    <property type="protein sequence ID" value="CAA44181.1"/>
    <property type="molecule type" value="Genomic_DNA"/>
</dbReference>
<dbReference type="EMBL" id="U37577">
    <property type="protein sequence ID" value="AAC60003.1"/>
    <property type="molecule type" value="Genomic_DNA"/>
</dbReference>
<dbReference type="EMBL" id="U37578">
    <property type="protein sequence ID" value="AAC60004.1"/>
    <property type="molecule type" value="Genomic_DNA"/>
</dbReference>
<dbReference type="EMBL" id="U37579">
    <property type="protein sequence ID" value="AAC60005.1"/>
    <property type="molecule type" value="Genomic_DNA"/>
</dbReference>
<dbReference type="PIR" id="S18716">
    <property type="entry name" value="HSCH3"/>
</dbReference>
<dbReference type="RefSeq" id="XP_001232833.1">
    <property type="nucleotide sequence ID" value="XM_001232832.4"/>
</dbReference>
<dbReference type="RefSeq" id="XP_015144912.1">
    <property type="nucleotide sequence ID" value="XM_015289426.1"/>
</dbReference>
<dbReference type="PDB" id="1EQZ">
    <property type="method" value="X-ray"/>
    <property type="resolution" value="2.50 A"/>
    <property type="chains" value="C/G=1-136"/>
</dbReference>
<dbReference type="PDB" id="1HIO">
    <property type="method" value="X-ray"/>
    <property type="resolution" value="3.10 A"/>
    <property type="chains" value="C=44-136"/>
</dbReference>
<dbReference type="PDB" id="1HQ3">
    <property type="method" value="X-ray"/>
    <property type="resolution" value="2.15 A"/>
    <property type="chains" value="C/G=1-136"/>
</dbReference>
<dbReference type="PDB" id="1TZY">
    <property type="method" value="X-ray"/>
    <property type="resolution" value="1.90 A"/>
    <property type="chains" value="C/G=1-136"/>
</dbReference>
<dbReference type="PDB" id="2ARO">
    <property type="method" value="X-ray"/>
    <property type="resolution" value="2.10 A"/>
    <property type="chains" value="C/G=1-136"/>
</dbReference>
<dbReference type="PDB" id="2HIO">
    <property type="method" value="X-ray"/>
    <property type="resolution" value="3.10 A"/>
    <property type="chains" value="C=1-136"/>
</dbReference>
<dbReference type="PDB" id="3C9K">
    <property type="method" value="EM"/>
    <property type="resolution" value="20.00 A"/>
    <property type="chains" value="C/G=2-136"/>
</dbReference>
<dbReference type="PDB" id="7BXT">
    <property type="method" value="EM"/>
    <property type="resolution" value="4.20 A"/>
    <property type="chains" value="A/E=1-64"/>
</dbReference>
<dbReference type="PDB" id="7BY0">
    <property type="method" value="EM"/>
    <property type="resolution" value="4.50 A"/>
    <property type="chains" value="A/E=1-64"/>
</dbReference>
<dbReference type="PDBsum" id="1EQZ"/>
<dbReference type="PDBsum" id="1HIO"/>
<dbReference type="PDBsum" id="1HQ3"/>
<dbReference type="PDBsum" id="1TZY"/>
<dbReference type="PDBsum" id="2ARO"/>
<dbReference type="PDBsum" id="2HIO"/>
<dbReference type="PDBsum" id="3C9K"/>
<dbReference type="PDBsum" id="7BXT"/>
<dbReference type="PDBsum" id="7BY0"/>
<dbReference type="EMDB" id="EMD-1469"/>
<dbReference type="SMR" id="P84229"/>
<dbReference type="FunCoup" id="P84229">
    <property type="interactions" value="281"/>
</dbReference>
<dbReference type="IntAct" id="P84229">
    <property type="interactions" value="3"/>
</dbReference>
<dbReference type="STRING" id="9031.ENSGALP00000042290"/>
<dbReference type="iPTMnet" id="P84229"/>
<dbReference type="PaxDb" id="9031-ENSGALP00000040958"/>
<dbReference type="Ensembl" id="ENSGALT00010029191.1">
    <property type="protein sequence ID" value="ENSGALP00010016931.1"/>
    <property type="gene ID" value="ENSGALG00010012169.1"/>
</dbReference>
<dbReference type="Ensembl" id="ENSGALT00010029379.1">
    <property type="protein sequence ID" value="ENSGALP00010017063.1"/>
    <property type="gene ID" value="ENSGALG00010012266.1"/>
</dbReference>
<dbReference type="Ensembl" id="ENSGALT00010029395.1">
    <property type="protein sequence ID" value="ENSGALP00010017073.1"/>
    <property type="gene ID" value="ENSGALG00010012277.1"/>
</dbReference>
<dbReference type="Ensembl" id="ENSGALT00010029400.1">
    <property type="protein sequence ID" value="ENSGALP00010017077.1"/>
    <property type="gene ID" value="ENSGALG00010012277.1"/>
</dbReference>
<dbReference type="Ensembl" id="ENSGALT00010029534.1">
    <property type="protein sequence ID" value="ENSGALP00010017166.1"/>
    <property type="gene ID" value="ENSGALG00010012338.1"/>
</dbReference>
<dbReference type="Ensembl" id="ENSGALT00010032659.1">
    <property type="protein sequence ID" value="ENSGALP00010019354.1"/>
    <property type="gene ID" value="ENSGALG00010013592.1"/>
</dbReference>
<dbReference type="KEGG" id="gga:100857439"/>
<dbReference type="KEGG" id="gga:100858681"/>
<dbReference type="KEGG" id="gga:417953"/>
<dbReference type="KEGG" id="gga:768333"/>
<dbReference type="KEGG" id="gga:769809"/>
<dbReference type="KEGG" id="gga:769852"/>
<dbReference type="KEGG" id="gga:770022"/>
<dbReference type="CTD" id="100857439"/>
<dbReference type="CTD" id="100858681"/>
<dbReference type="CTD" id="417953"/>
<dbReference type="CTD" id="769852"/>
<dbReference type="CTD" id="770022"/>
<dbReference type="VEuPathDB" id="HostDB:geneid_417953"/>
<dbReference type="VEuPathDB" id="HostDB:geneid_768333"/>
<dbReference type="VEuPathDB" id="HostDB:geneid_770022"/>
<dbReference type="VEuPathDB" id="HostDB:LOC100857439"/>
<dbReference type="VEuPathDB" id="HostDB:LOC121106438"/>
<dbReference type="VEuPathDB" id="HostDB:LOC121110383"/>
<dbReference type="VEuPathDB" id="HostDB:LOC769852"/>
<dbReference type="eggNOG" id="KOG1745">
    <property type="taxonomic scope" value="Eukaryota"/>
</dbReference>
<dbReference type="GeneTree" id="ENSGT01130000278271"/>
<dbReference type="HOGENOM" id="CLU_078295_4_0_1"/>
<dbReference type="InParanoid" id="P84229"/>
<dbReference type="OMA" id="ANDCAIH"/>
<dbReference type="OrthoDB" id="6268231at2759"/>
<dbReference type="PhylomeDB" id="P84229"/>
<dbReference type="TreeFam" id="TF314241"/>
<dbReference type="Reactome" id="R-GGA-1266695">
    <property type="pathway name" value="Interleukin-7 signaling"/>
</dbReference>
<dbReference type="Reactome" id="R-GGA-201722">
    <property type="pathway name" value="Formation of the beta-catenin:TCF transactivating complex"/>
</dbReference>
<dbReference type="Reactome" id="R-GGA-212300">
    <property type="pathway name" value="PRC2 methylates histones and DNA"/>
</dbReference>
<dbReference type="Reactome" id="R-GGA-2559580">
    <property type="pathway name" value="Oxidative Stress Induced Senescence"/>
</dbReference>
<dbReference type="Reactome" id="R-GGA-3214815">
    <property type="pathway name" value="HDACs deacetylate histones"/>
</dbReference>
<dbReference type="Reactome" id="R-GGA-3214847">
    <property type="pathway name" value="HATs acetylate histones"/>
</dbReference>
<dbReference type="Reactome" id="R-GGA-3247509">
    <property type="pathway name" value="Chromatin modifying enzymes"/>
</dbReference>
<dbReference type="Reactome" id="R-GGA-5250924">
    <property type="pathway name" value="B-WICH complex positively regulates rRNA expression"/>
</dbReference>
<dbReference type="Reactome" id="R-GGA-5578749">
    <property type="pathway name" value="Transcriptional regulation by small RNAs"/>
</dbReference>
<dbReference type="Reactome" id="R-GGA-5625886">
    <property type="pathway name" value="Activated PKN1 stimulates transcription of AR (androgen receptor) regulated genes KLK2 and KLK3"/>
</dbReference>
<dbReference type="Reactome" id="R-GGA-68616">
    <property type="pathway name" value="Assembly of the ORC complex at the origin of replication"/>
</dbReference>
<dbReference type="Reactome" id="R-GGA-73728">
    <property type="pathway name" value="RNA Polymerase I Promoter Opening"/>
</dbReference>
<dbReference type="Reactome" id="R-GGA-73772">
    <property type="pathway name" value="RNA Polymerase I Promoter Escape"/>
</dbReference>
<dbReference type="Reactome" id="R-GGA-8936459">
    <property type="pathway name" value="RUNX1 regulates genes involved in megakaryocyte differentiation and platelet function"/>
</dbReference>
<dbReference type="Reactome" id="R-GGA-9018519">
    <property type="pathway name" value="Estrogen-dependent gene expression"/>
</dbReference>
<dbReference type="Reactome" id="R-GGA-983231">
    <property type="pathway name" value="Factors involved in megakaryocyte development and platelet production"/>
</dbReference>
<dbReference type="Reactome" id="R-GGA-9841922">
    <property type="pathway name" value="MLL4 and MLL3 complexes regulate expression of PPARG target genes in adipogenesis and hepatic steatosis"/>
</dbReference>
<dbReference type="Reactome" id="R-GGA-9843940">
    <property type="pathway name" value="Regulation of endogenous retroelements by KRAB-ZFP proteins"/>
</dbReference>
<dbReference type="Reactome" id="R-GGA-9843970">
    <property type="pathway name" value="Regulation of endogenous retroelements by the Human Silencing Hub (HUSH) complex"/>
</dbReference>
<dbReference type="EvolutionaryTrace" id="P84229"/>
<dbReference type="PRO" id="PR:P84229"/>
<dbReference type="Proteomes" id="UP000000539">
    <property type="component" value="Chromosome 1"/>
</dbReference>
<dbReference type="Bgee" id="ENSGALG00000027064">
    <property type="expression patterns" value="Expressed in liver and 11 other cell types or tissues"/>
</dbReference>
<dbReference type="GO" id="GO:0000786">
    <property type="term" value="C:nucleosome"/>
    <property type="evidence" value="ECO:0007669"/>
    <property type="project" value="UniProtKB-KW"/>
</dbReference>
<dbReference type="GO" id="GO:0005634">
    <property type="term" value="C:nucleus"/>
    <property type="evidence" value="ECO:0007669"/>
    <property type="project" value="UniProtKB-SubCell"/>
</dbReference>
<dbReference type="GO" id="GO:0003677">
    <property type="term" value="F:DNA binding"/>
    <property type="evidence" value="ECO:0007669"/>
    <property type="project" value="UniProtKB-KW"/>
</dbReference>
<dbReference type="GO" id="GO:0046982">
    <property type="term" value="F:protein heterodimerization activity"/>
    <property type="evidence" value="ECO:0007669"/>
    <property type="project" value="InterPro"/>
</dbReference>
<dbReference type="GO" id="GO:0030527">
    <property type="term" value="F:structural constituent of chromatin"/>
    <property type="evidence" value="ECO:0007669"/>
    <property type="project" value="InterPro"/>
</dbReference>
<dbReference type="CDD" id="cd22911">
    <property type="entry name" value="HFD_H3"/>
    <property type="match status" value="1"/>
</dbReference>
<dbReference type="FunFam" id="1.10.20.10:FF:000078">
    <property type="entry name" value="Histone H3"/>
    <property type="match status" value="1"/>
</dbReference>
<dbReference type="FunFam" id="1.10.20.10:FF:000044">
    <property type="entry name" value="Histone H3.3"/>
    <property type="match status" value="1"/>
</dbReference>
<dbReference type="Gene3D" id="1.10.20.10">
    <property type="entry name" value="Histone, subunit A"/>
    <property type="match status" value="1"/>
</dbReference>
<dbReference type="InterPro" id="IPR009072">
    <property type="entry name" value="Histone-fold"/>
</dbReference>
<dbReference type="InterPro" id="IPR007125">
    <property type="entry name" value="Histone_H2A/H2B/H3"/>
</dbReference>
<dbReference type="InterPro" id="IPR000164">
    <property type="entry name" value="Histone_H3/CENP-A"/>
</dbReference>
<dbReference type="PANTHER" id="PTHR11426">
    <property type="entry name" value="HISTONE H3"/>
    <property type="match status" value="1"/>
</dbReference>
<dbReference type="Pfam" id="PF00125">
    <property type="entry name" value="Histone"/>
    <property type="match status" value="1"/>
</dbReference>
<dbReference type="PRINTS" id="PR00622">
    <property type="entry name" value="HISTONEH3"/>
</dbReference>
<dbReference type="SMART" id="SM00428">
    <property type="entry name" value="H3"/>
    <property type="match status" value="1"/>
</dbReference>
<dbReference type="SUPFAM" id="SSF47113">
    <property type="entry name" value="Histone-fold"/>
    <property type="match status" value="1"/>
</dbReference>
<dbReference type="PROSITE" id="PS00322">
    <property type="entry name" value="HISTONE_H3_1"/>
    <property type="match status" value="1"/>
</dbReference>
<dbReference type="PROSITE" id="PS00959">
    <property type="entry name" value="HISTONE_H3_2"/>
    <property type="match status" value="1"/>
</dbReference>
<accession>P84229</accession>
<accession>P02295</accession>
<accession>P02297</accession>
<accession>P16105</accession>
<accession>P17269</accession>
<accession>P17320</accession>
<comment type="function">
    <text>Core component of nucleosome. Nucleosomes wrap and compact DNA into chromatin, limiting DNA accessibility to the cellular machineries which require DNA as a template. Histones thereby play a central role in transcription regulation, DNA repair, DNA replication and chromosomal stability. DNA accessibility is regulated via a complex set of post-translational modifications of histones, also called histone code, and nucleosome remodeling.</text>
</comment>
<comment type="subunit">
    <text evidence="9 11 12">The nucleosome is a histone octamer containing two molecules each of H2A, H2B, H3 and H4 assembled in one H3-H4 heterotetramer and two H2A-H2B heterodimers. The octamer wraps approximately 147 bp of DNA. Interacts with HMGB1.</text>
</comment>
<comment type="subcellular location">
    <subcellularLocation>
        <location>Nucleus</location>
    </subcellularLocation>
    <subcellularLocation>
        <location>Chromosome</location>
    </subcellularLocation>
</comment>
<comment type="developmental stage">
    <text>Expressed during S phase, then expression strongly decreases as cell division slows down during the process of differentiation.</text>
</comment>
<comment type="PTM">
    <text evidence="7">Acetylation is generally linked to gene activation. Acetylation on Lys-19 (H3K18ac) and Lys-24 (H3K24ac) favors methylation at Arg-18 (H3R17me). Acetylation at Lys-123 (H3K122ac) by EP300/p300 plays a central role in chromatin structure: localizes at the surface of the histone octamer and stimulates transcription, possibly by promoting nucleosome instability (By similarity).</text>
</comment>
<comment type="PTM">
    <text evidence="7">Asymmetric dimethylation at Arg-18 (H3R17me2a) is linked to gene activation. Asymmetric dimethylation at Arg-3 (H3R2me2a) by PRMT6 is linked to gene repression and is mutually exclusive with H3 Lys-5 methylation (H3K4me2 and H3K4me3). H3R2me2a is present at the 3' of genes regardless of their transcription state and is enriched on inactive promoters, while it is absent on active promoters (By similarity).</text>
</comment>
<comment type="PTM">
    <text evidence="7">Methylation at Lys-5 (H3K4me), Lys-37 (H3K36me) and Lys-80 (H3K79me) are linked to gene activation. Methylation at Lys-5 (H3K4me) facilitates subsequent acetylation of H3 and H4. Methylation at Lys-80 (H3K79me) is associated with DNA double-strand break (DSB) responses and is a specific target for TP53BP1. Methylation at Lys-10 (H3K9me) and Lys-28 (H3K27me) are linked to gene repression. Methylation at Lys-10 (H3K9me) is a specific target for HP1 proteins (CBX1, CBX3 and CBX5) and prevents subsequent phosphorylation at Ser-11 (H3S10ph) and acetylation of H3 and H4. Methylation at Lys-5 (H3K4me) and Lys-80 (H3K79me) require preliminary monoubiquitination of H2B at 'Lys-120' (By similarity).</text>
</comment>
<comment type="PTM">
    <text evidence="7">Phosphorylated at Thr-4 (H3T3ph) by VRK1 (By similarity). Phosphorylated at Thr-4 (H3T3ph) by HASPIN during prophase and dephosphorylated during anaphase. Phosphorylation at Ser-11 (H3S10ph) by AURKB is crucial for chromosome condensation and cell-cycle progression during mitosis and meiosis. In addition phosphorylation at Ser-11 (H3S10ph) by RPS6KA4 and RPS6KA5 is important during interphase because it enables the transcription of genes following external stimulation, like mitogens, stress, growth factors or UV irradiation and result in the activation of genes, such as c-fos and c-jun. Phosphorylation at Ser-11 (H3S10ph), which is linked to gene activation, prevents methylation at Lys-10 (H3K9me) but facilitates acetylation of H3 and H4. Phosphorylation at Ser-11 (H3S10ph) by AURKB mediates the dissociation of HP1 proteins (CBX1, CBX3 and CBX5) from heterochromatin. Phosphorylation at Ser-11 (H3S10ph) is also an essential regulatory mechanism for neoplastic cell transformation. Phosphorylated at Ser-29 (H3S28ph) by MAP3K20 isoform 1, RPS6KA5 or AURKB during mitosis or upon ultraviolet B irradiation. Phosphorylation at Thr-7 (H3T6ph) by PRKCB is a specific tag for epigenetic transcriptional activation that prevents demethylation of Lys-5 (H3K4me) by LSD1/KDM1A. At centromeres, specifically phosphorylated at Thr-12 (H3T11ph) from prophase to early anaphase, by DAPK3 and PKN1. Phosphorylation at Thr-12 (H3T11ph) by PKN1 or isoform M2 of PKM (PKM2) is a specific tag for epigenetic transcriptional activation that promotes demethylation of Lys-10 (H3K9me) by KDM4C/JMJD2C. Phosphorylation at Tyr-42 (H3Y41ph) by JAK2 promotes exclusion of CBX5 (HP1 alpha) from chromatin (By similarity).</text>
</comment>
<comment type="PTM">
    <text evidence="7">Monoubiquitinated by RAG1 in lymphoid cells, monoubiquitination is required for V(D)J recombination.</text>
</comment>
<comment type="PTM">
    <text evidence="7">Lysine deamination at Lys-5 (H3K4all) to form allysine only takes place on H3K4me3 and results in gene repression.</text>
</comment>
<comment type="PTM">
    <text evidence="3">Butyrylation of histones marks active promoters and competes with histone acetylation. It is present during late spermatogenesis.</text>
</comment>
<comment type="PTM">
    <text evidence="7">Succinylation at Lys-80 (H3K79succ) by KAT2A takes place with a maximum frequency around the transcription start sites of genes. It gives a specific tag for epigenetic transcription activation. Desuccinylation at Lys-123 (H3K122succ) by SIRT7 in response to DNA damage promotes chromatin condensation and double-strand breaks (DSBs) repair.</text>
</comment>
<comment type="PTM">
    <text evidence="2">Serine ADP-ribosylation by PARP1 or PARP2 constitutes the primary form of ADP-ribosylation of proteins in response to DNA damage. Serine ADP-ribosylation at Ser-11 (H3S10ADPr) promotes recruitment of CHD1L. H3S10ADPr is mutually exclusive with phosphorylation at Ser-11 (H3S10ph) and impairs acetylation at Lys-10 (H3K9ac).</text>
</comment>
<comment type="PTM">
    <text evidence="7">Serotonylated by TGM2 at Gln-6 (H3Q5ser) during serotonergic neuron differentiation (By similarity). H3Q5ser is associated with trimethylation of Lys-5 (H3K4me3) and enhances general transcription factor IID (TFIID) complex-binding to H3K4me3, thereby facilitating transcription (By similarity).</text>
</comment>
<comment type="PTM">
    <text evidence="6 7">Dopaminylated by TGM2 at Gln-6 (H3Q5dop) in ventral tegmental area (VTA) neurons (By similarity). H3Q5dop mediates neurotransmission-independent role of nuclear dopamine by regulating relapse-related transcriptional plasticity in the reward system (By similarity).</text>
</comment>
<comment type="PTM">
    <text evidence="7">Lactylated in macrophages by EP300/P300 by using lactoyl-CoA directly derived from endogenous or exogenous lactate, leading to stimulates gene transcription.</text>
</comment>
<comment type="similarity">
    <text evidence="14">Belongs to the histone H3 family.</text>
</comment>